<accession>B1YRD4</accession>
<protein>
    <recommendedName>
        <fullName evidence="1">Small ribosomal subunit protein uS19</fullName>
    </recommendedName>
    <alternativeName>
        <fullName evidence="2">30S ribosomal protein S19</fullName>
    </alternativeName>
</protein>
<proteinExistence type="inferred from homology"/>
<gene>
    <name evidence="1" type="primary">rpsS</name>
    <name type="ordered locus">BamMC406_0280</name>
</gene>
<name>RS19_BURA4</name>
<reference key="1">
    <citation type="submission" date="2008-04" db="EMBL/GenBank/DDBJ databases">
        <title>Complete sequence of chromosome 1 of Burkholderia ambifaria MC40-6.</title>
        <authorList>
            <person name="Copeland A."/>
            <person name="Lucas S."/>
            <person name="Lapidus A."/>
            <person name="Glavina del Rio T."/>
            <person name="Dalin E."/>
            <person name="Tice H."/>
            <person name="Pitluck S."/>
            <person name="Chain P."/>
            <person name="Malfatti S."/>
            <person name="Shin M."/>
            <person name="Vergez L."/>
            <person name="Lang D."/>
            <person name="Schmutz J."/>
            <person name="Larimer F."/>
            <person name="Land M."/>
            <person name="Hauser L."/>
            <person name="Kyrpides N."/>
            <person name="Lykidis A."/>
            <person name="Ramette A."/>
            <person name="Konstantinidis K."/>
            <person name="Tiedje J."/>
            <person name="Richardson P."/>
        </authorList>
    </citation>
    <scope>NUCLEOTIDE SEQUENCE [LARGE SCALE GENOMIC DNA]</scope>
    <source>
        <strain>MC40-6</strain>
    </source>
</reference>
<dbReference type="EMBL" id="CP001025">
    <property type="protein sequence ID" value="ACB62781.1"/>
    <property type="molecule type" value="Genomic_DNA"/>
</dbReference>
<dbReference type="RefSeq" id="WP_004199273.1">
    <property type="nucleotide sequence ID" value="NC_010551.1"/>
</dbReference>
<dbReference type="SMR" id="B1YRD4"/>
<dbReference type="GeneID" id="98107156"/>
<dbReference type="KEGG" id="bac:BamMC406_0280"/>
<dbReference type="HOGENOM" id="CLU_144911_0_1_4"/>
<dbReference type="OrthoDB" id="9797833at2"/>
<dbReference type="Proteomes" id="UP000001680">
    <property type="component" value="Chromosome 1"/>
</dbReference>
<dbReference type="GO" id="GO:0005737">
    <property type="term" value="C:cytoplasm"/>
    <property type="evidence" value="ECO:0007669"/>
    <property type="project" value="UniProtKB-ARBA"/>
</dbReference>
<dbReference type="GO" id="GO:0015935">
    <property type="term" value="C:small ribosomal subunit"/>
    <property type="evidence" value="ECO:0007669"/>
    <property type="project" value="InterPro"/>
</dbReference>
<dbReference type="GO" id="GO:0019843">
    <property type="term" value="F:rRNA binding"/>
    <property type="evidence" value="ECO:0007669"/>
    <property type="project" value="UniProtKB-UniRule"/>
</dbReference>
<dbReference type="GO" id="GO:0003735">
    <property type="term" value="F:structural constituent of ribosome"/>
    <property type="evidence" value="ECO:0007669"/>
    <property type="project" value="InterPro"/>
</dbReference>
<dbReference type="GO" id="GO:0000028">
    <property type="term" value="P:ribosomal small subunit assembly"/>
    <property type="evidence" value="ECO:0007669"/>
    <property type="project" value="TreeGrafter"/>
</dbReference>
<dbReference type="GO" id="GO:0006412">
    <property type="term" value="P:translation"/>
    <property type="evidence" value="ECO:0007669"/>
    <property type="project" value="UniProtKB-UniRule"/>
</dbReference>
<dbReference type="FunFam" id="3.30.860.10:FF:000001">
    <property type="entry name" value="30S ribosomal protein S19"/>
    <property type="match status" value="1"/>
</dbReference>
<dbReference type="Gene3D" id="3.30.860.10">
    <property type="entry name" value="30s Ribosomal Protein S19, Chain A"/>
    <property type="match status" value="1"/>
</dbReference>
<dbReference type="HAMAP" id="MF_00531">
    <property type="entry name" value="Ribosomal_uS19"/>
    <property type="match status" value="1"/>
</dbReference>
<dbReference type="InterPro" id="IPR002222">
    <property type="entry name" value="Ribosomal_uS19"/>
</dbReference>
<dbReference type="InterPro" id="IPR005732">
    <property type="entry name" value="Ribosomal_uS19_bac-type"/>
</dbReference>
<dbReference type="InterPro" id="IPR020934">
    <property type="entry name" value="Ribosomal_uS19_CS"/>
</dbReference>
<dbReference type="InterPro" id="IPR023575">
    <property type="entry name" value="Ribosomal_uS19_SF"/>
</dbReference>
<dbReference type="NCBIfam" id="TIGR01050">
    <property type="entry name" value="rpsS_bact"/>
    <property type="match status" value="1"/>
</dbReference>
<dbReference type="PANTHER" id="PTHR11880">
    <property type="entry name" value="RIBOSOMAL PROTEIN S19P FAMILY MEMBER"/>
    <property type="match status" value="1"/>
</dbReference>
<dbReference type="PANTHER" id="PTHR11880:SF8">
    <property type="entry name" value="SMALL RIBOSOMAL SUBUNIT PROTEIN US19M"/>
    <property type="match status" value="1"/>
</dbReference>
<dbReference type="Pfam" id="PF00203">
    <property type="entry name" value="Ribosomal_S19"/>
    <property type="match status" value="1"/>
</dbReference>
<dbReference type="PIRSF" id="PIRSF002144">
    <property type="entry name" value="Ribosomal_S19"/>
    <property type="match status" value="1"/>
</dbReference>
<dbReference type="PRINTS" id="PR00975">
    <property type="entry name" value="RIBOSOMALS19"/>
</dbReference>
<dbReference type="SUPFAM" id="SSF54570">
    <property type="entry name" value="Ribosomal protein S19"/>
    <property type="match status" value="1"/>
</dbReference>
<dbReference type="PROSITE" id="PS00323">
    <property type="entry name" value="RIBOSOMAL_S19"/>
    <property type="match status" value="1"/>
</dbReference>
<organism>
    <name type="scientific">Burkholderia ambifaria (strain MC40-6)</name>
    <dbReference type="NCBI Taxonomy" id="398577"/>
    <lineage>
        <taxon>Bacteria</taxon>
        <taxon>Pseudomonadati</taxon>
        <taxon>Pseudomonadota</taxon>
        <taxon>Betaproteobacteria</taxon>
        <taxon>Burkholderiales</taxon>
        <taxon>Burkholderiaceae</taxon>
        <taxon>Burkholderia</taxon>
        <taxon>Burkholderia cepacia complex</taxon>
    </lineage>
</organism>
<sequence length="91" mass="10108">MARSVKKGPFCDAHLLKKVEAAAASRDKKPIKTWSRRSTILPDFIGLTIAVHNGRQHVPVYISENMVGHKLGEFALTRTFKGHAADKKAKK</sequence>
<feature type="chain" id="PRO_1000127938" description="Small ribosomal subunit protein uS19">
    <location>
        <begin position="1"/>
        <end position="91"/>
    </location>
</feature>
<keyword id="KW-0687">Ribonucleoprotein</keyword>
<keyword id="KW-0689">Ribosomal protein</keyword>
<keyword id="KW-0694">RNA-binding</keyword>
<keyword id="KW-0699">rRNA-binding</keyword>
<comment type="function">
    <text evidence="1">Protein S19 forms a complex with S13 that binds strongly to the 16S ribosomal RNA.</text>
</comment>
<comment type="similarity">
    <text evidence="1">Belongs to the universal ribosomal protein uS19 family.</text>
</comment>
<evidence type="ECO:0000255" key="1">
    <source>
        <dbReference type="HAMAP-Rule" id="MF_00531"/>
    </source>
</evidence>
<evidence type="ECO:0000305" key="2"/>